<feature type="chain" id="PRO_1000072036" description="Chaperone protein DnaK">
    <location>
        <begin position="1"/>
        <end position="608"/>
    </location>
</feature>
<feature type="region of interest" description="Disordered" evidence="2">
    <location>
        <begin position="577"/>
        <end position="608"/>
    </location>
</feature>
<feature type="compositionally biased region" description="Low complexity" evidence="2">
    <location>
        <begin position="577"/>
        <end position="586"/>
    </location>
</feature>
<feature type="compositionally biased region" description="Gly residues" evidence="2">
    <location>
        <begin position="587"/>
        <end position="597"/>
    </location>
</feature>
<feature type="compositionally biased region" description="Basic and acidic residues" evidence="2">
    <location>
        <begin position="599"/>
        <end position="608"/>
    </location>
</feature>
<feature type="modified residue" description="Phosphothreonine; by autocatalysis" evidence="1">
    <location>
        <position position="173"/>
    </location>
</feature>
<comment type="function">
    <text evidence="1">Acts as a chaperone.</text>
</comment>
<comment type="induction">
    <text evidence="1">By stress conditions e.g. heat shock.</text>
</comment>
<comment type="similarity">
    <text evidence="1">Belongs to the heat shock protein 70 family.</text>
</comment>
<proteinExistence type="inferred from homology"/>
<reference key="1">
    <citation type="journal article" date="2008" name="J. Bacteriol.">
        <title>Genome sequence of Lactobacillus helveticus: an organism distinguished by selective gene loss and IS element expansion.</title>
        <authorList>
            <person name="Callanan M."/>
            <person name="Kaleta P."/>
            <person name="O'Callaghan J."/>
            <person name="O'Sullivan O."/>
            <person name="Jordan K."/>
            <person name="McAuliffe O."/>
            <person name="Sangrador-Vegas A."/>
            <person name="Slattery L."/>
            <person name="Fitzgerald G.F."/>
            <person name="Beresford T."/>
            <person name="Ross R.P."/>
        </authorList>
    </citation>
    <scope>NUCLEOTIDE SEQUENCE [LARGE SCALE GENOMIC DNA]</scope>
    <source>
        <strain>DPC 4571</strain>
    </source>
</reference>
<protein>
    <recommendedName>
        <fullName evidence="1">Chaperone protein DnaK</fullName>
    </recommendedName>
    <alternativeName>
        <fullName evidence="1">HSP70</fullName>
    </alternativeName>
    <alternativeName>
        <fullName evidence="1">Heat shock 70 kDa protein</fullName>
    </alternativeName>
    <alternativeName>
        <fullName evidence="1">Heat shock protein 70</fullName>
    </alternativeName>
</protein>
<accession>A8YVQ3</accession>
<gene>
    <name evidence="1" type="primary">dnaK</name>
    <name type="ordered locus">lhv_1336</name>
</gene>
<sequence length="608" mass="65701">MSKVIGIDLGTTNSAVAVLEGKEPKIITNPEGNRTTPSVVAFKDGEIQIGEVAKRQAITNPNTIVSIKRHMGEADYKVKVGDKEYTPQEISAFILQYIKKFSEDYLGEKVTDAVITVPAYFNDAQRQATKDAGKIAGLNVQRIINEPTASALAFGLNKDQDEKVLVYDLGGGTFDVSVLQLGDGVFQVLSTNGDTHLGGDDFDNRIMDWLIKNFKDENGVDLSKDKMAMQRLKDAAEKAKKDLSGVSSTHISLPFISAGEAGPLHLEADLTRAKFDELTSDLVEKTKVPFDNALKDAGLTVNDIDKVILNGGSTRIPAVQKAVKEWAGKEPDHSINPDEAVALGAAIQGGVISGDVKDIVLLDVTPLSLGIETMGGVFTKLIDRNTTIPTSKSQIFSTAADNQPAVDIHVLQGERPMAADDKTLGRFELTDIPPAPRGVPQIQVTFDIDKNGIVNVSAKDMGTGKEQKITIKSSSGLSDEEIKRMQKDAEEHAEEDKKRKEEVDLRNEVDQLIFTTDKTLKDTKDKLSDSDRKPVEDALEALKKAQKDNNLDEMKEKKDALSKAAQDLAVKLYQQNGGAQGAAGQAGPQGGNNGGAQDGEFHKVDPNK</sequence>
<keyword id="KW-0067">ATP-binding</keyword>
<keyword id="KW-0143">Chaperone</keyword>
<keyword id="KW-0547">Nucleotide-binding</keyword>
<keyword id="KW-0597">Phosphoprotein</keyword>
<keyword id="KW-0346">Stress response</keyword>
<organism>
    <name type="scientific">Lactobacillus helveticus (strain DPC 4571)</name>
    <dbReference type="NCBI Taxonomy" id="405566"/>
    <lineage>
        <taxon>Bacteria</taxon>
        <taxon>Bacillati</taxon>
        <taxon>Bacillota</taxon>
        <taxon>Bacilli</taxon>
        <taxon>Lactobacillales</taxon>
        <taxon>Lactobacillaceae</taxon>
        <taxon>Lactobacillus</taxon>
    </lineage>
</organism>
<evidence type="ECO:0000255" key="1">
    <source>
        <dbReference type="HAMAP-Rule" id="MF_00332"/>
    </source>
</evidence>
<evidence type="ECO:0000256" key="2">
    <source>
        <dbReference type="SAM" id="MobiDB-lite"/>
    </source>
</evidence>
<name>DNAK_LACH4</name>
<dbReference type="EMBL" id="CP000517">
    <property type="protein sequence ID" value="ABX27340.1"/>
    <property type="molecule type" value="Genomic_DNA"/>
</dbReference>
<dbReference type="RefSeq" id="WP_012211996.1">
    <property type="nucleotide sequence ID" value="NC_010080.1"/>
</dbReference>
<dbReference type="SMR" id="A8YVQ3"/>
<dbReference type="KEGG" id="lhe:lhv_1336"/>
<dbReference type="eggNOG" id="COG0443">
    <property type="taxonomic scope" value="Bacteria"/>
</dbReference>
<dbReference type="HOGENOM" id="CLU_005965_2_4_9"/>
<dbReference type="Proteomes" id="UP000000790">
    <property type="component" value="Chromosome"/>
</dbReference>
<dbReference type="GO" id="GO:0005524">
    <property type="term" value="F:ATP binding"/>
    <property type="evidence" value="ECO:0007669"/>
    <property type="project" value="UniProtKB-UniRule"/>
</dbReference>
<dbReference type="GO" id="GO:0140662">
    <property type="term" value="F:ATP-dependent protein folding chaperone"/>
    <property type="evidence" value="ECO:0007669"/>
    <property type="project" value="InterPro"/>
</dbReference>
<dbReference type="GO" id="GO:0051082">
    <property type="term" value="F:unfolded protein binding"/>
    <property type="evidence" value="ECO:0007669"/>
    <property type="project" value="InterPro"/>
</dbReference>
<dbReference type="CDD" id="cd10234">
    <property type="entry name" value="ASKHA_NBD_HSP70_DnaK-like"/>
    <property type="match status" value="1"/>
</dbReference>
<dbReference type="FunFam" id="2.60.34.10:FF:000014">
    <property type="entry name" value="Chaperone protein DnaK HSP70"/>
    <property type="match status" value="1"/>
</dbReference>
<dbReference type="FunFam" id="1.20.1270.10:FF:000001">
    <property type="entry name" value="Molecular chaperone DnaK"/>
    <property type="match status" value="1"/>
</dbReference>
<dbReference type="FunFam" id="3.30.420.40:FF:000071">
    <property type="entry name" value="Molecular chaperone DnaK"/>
    <property type="match status" value="1"/>
</dbReference>
<dbReference type="FunFam" id="3.90.640.10:FF:000003">
    <property type="entry name" value="Molecular chaperone DnaK"/>
    <property type="match status" value="1"/>
</dbReference>
<dbReference type="Gene3D" id="1.20.1270.10">
    <property type="match status" value="1"/>
</dbReference>
<dbReference type="Gene3D" id="3.30.420.40">
    <property type="match status" value="2"/>
</dbReference>
<dbReference type="Gene3D" id="3.90.640.10">
    <property type="entry name" value="Actin, Chain A, domain 4"/>
    <property type="match status" value="1"/>
</dbReference>
<dbReference type="Gene3D" id="2.60.34.10">
    <property type="entry name" value="Substrate Binding Domain Of DNAk, Chain A, domain 1"/>
    <property type="match status" value="1"/>
</dbReference>
<dbReference type="HAMAP" id="MF_00332">
    <property type="entry name" value="DnaK"/>
    <property type="match status" value="1"/>
</dbReference>
<dbReference type="InterPro" id="IPR043129">
    <property type="entry name" value="ATPase_NBD"/>
</dbReference>
<dbReference type="InterPro" id="IPR012725">
    <property type="entry name" value="Chaperone_DnaK"/>
</dbReference>
<dbReference type="InterPro" id="IPR018181">
    <property type="entry name" value="Heat_shock_70_CS"/>
</dbReference>
<dbReference type="InterPro" id="IPR029048">
    <property type="entry name" value="HSP70_C_sf"/>
</dbReference>
<dbReference type="InterPro" id="IPR029047">
    <property type="entry name" value="HSP70_peptide-bd_sf"/>
</dbReference>
<dbReference type="InterPro" id="IPR013126">
    <property type="entry name" value="Hsp_70_fam"/>
</dbReference>
<dbReference type="NCBIfam" id="NF001413">
    <property type="entry name" value="PRK00290.1"/>
    <property type="match status" value="1"/>
</dbReference>
<dbReference type="NCBIfam" id="TIGR02350">
    <property type="entry name" value="prok_dnaK"/>
    <property type="match status" value="1"/>
</dbReference>
<dbReference type="PANTHER" id="PTHR19375">
    <property type="entry name" value="HEAT SHOCK PROTEIN 70KDA"/>
    <property type="match status" value="1"/>
</dbReference>
<dbReference type="Pfam" id="PF00012">
    <property type="entry name" value="HSP70"/>
    <property type="match status" value="1"/>
</dbReference>
<dbReference type="PRINTS" id="PR00301">
    <property type="entry name" value="HEATSHOCK70"/>
</dbReference>
<dbReference type="SUPFAM" id="SSF53067">
    <property type="entry name" value="Actin-like ATPase domain"/>
    <property type="match status" value="2"/>
</dbReference>
<dbReference type="SUPFAM" id="SSF100934">
    <property type="entry name" value="Heat shock protein 70kD (HSP70), C-terminal subdomain"/>
    <property type="match status" value="1"/>
</dbReference>
<dbReference type="SUPFAM" id="SSF100920">
    <property type="entry name" value="Heat shock protein 70kD (HSP70), peptide-binding domain"/>
    <property type="match status" value="1"/>
</dbReference>
<dbReference type="PROSITE" id="PS00297">
    <property type="entry name" value="HSP70_1"/>
    <property type="match status" value="1"/>
</dbReference>
<dbReference type="PROSITE" id="PS00329">
    <property type="entry name" value="HSP70_2"/>
    <property type="match status" value="1"/>
</dbReference>
<dbReference type="PROSITE" id="PS01036">
    <property type="entry name" value="HSP70_3"/>
    <property type="match status" value="1"/>
</dbReference>